<organism>
    <name type="scientific">Mus musculus</name>
    <name type="common">Mouse</name>
    <dbReference type="NCBI Taxonomy" id="10090"/>
    <lineage>
        <taxon>Eukaryota</taxon>
        <taxon>Metazoa</taxon>
        <taxon>Chordata</taxon>
        <taxon>Craniata</taxon>
        <taxon>Vertebrata</taxon>
        <taxon>Euteleostomi</taxon>
        <taxon>Mammalia</taxon>
        <taxon>Eutheria</taxon>
        <taxon>Euarchontoglires</taxon>
        <taxon>Glires</taxon>
        <taxon>Rodentia</taxon>
        <taxon>Myomorpha</taxon>
        <taxon>Muroidea</taxon>
        <taxon>Muridae</taxon>
        <taxon>Murinae</taxon>
        <taxon>Mus</taxon>
        <taxon>Mus</taxon>
    </lineage>
</organism>
<proteinExistence type="evidence at protein level"/>
<gene>
    <name type="primary">Tsks</name>
    <name type="synonym">Stk22s1</name>
</gene>
<comment type="function">
    <text>May play a role in testicular physiology, most probably in the process of spermatogenesis or spermatid development.</text>
</comment>
<comment type="subcellular location">
    <subcellularLocation>
        <location>Cytoplasm</location>
        <location>Cytoskeleton</location>
        <location>Microtubule organizing center</location>
        <location>Centrosome</location>
        <location>Centriole</location>
    </subcellularLocation>
    <subcellularLocation>
        <location>Cytoplasmic vesicle</location>
        <location>Secretory vesicle</location>
        <location>Acrosome</location>
    </subcellularLocation>
    <text>Concentrates in spermatid centrioles during flagellogenesis. Associates with acrosomal vesicle in sperm. In elongating spermatids, accumulates in a ring-shaped structure originating from the chromatoid body.</text>
</comment>
<comment type="tissue specificity">
    <text evidence="4">Testis specific.</text>
</comment>
<comment type="PTM">
    <text evidence="3 4">Phosphorylated on serine residue(s) by STK22A/TSSK1 and STK22B/TSSK2.</text>
</comment>
<comment type="sequence caution" evidence="5">
    <conflict type="frameshift">
        <sequence resource="EMBL-CDS" id="AAC03366"/>
    </conflict>
</comment>
<reference key="1">
    <citation type="submission" date="2000-11" db="EMBL/GenBank/DDBJ databases">
        <title>A potential substrate of the testis specific serine kinases tssk-1 and tssk-2.</title>
        <authorList>
            <person name="Zuercher G."/>
            <person name="Kueng P."/>
            <person name="Andres A.-C."/>
            <person name="Ziemiecki A."/>
        </authorList>
    </citation>
    <scope>NUCLEOTIDE SEQUENCE [MRNA]</scope>
    <source>
        <tissue>Testis</tissue>
    </source>
</reference>
<reference key="2">
    <citation type="journal article" date="2009" name="PLoS Biol.">
        <title>Lineage-specific biology revealed by a finished genome assembly of the mouse.</title>
        <authorList>
            <person name="Church D.M."/>
            <person name="Goodstadt L."/>
            <person name="Hillier L.W."/>
            <person name="Zody M.C."/>
            <person name="Goldstein S."/>
            <person name="She X."/>
            <person name="Bult C.J."/>
            <person name="Agarwala R."/>
            <person name="Cherry J.L."/>
            <person name="DiCuccio M."/>
            <person name="Hlavina W."/>
            <person name="Kapustin Y."/>
            <person name="Meric P."/>
            <person name="Maglott D."/>
            <person name="Birtle Z."/>
            <person name="Marques A.C."/>
            <person name="Graves T."/>
            <person name="Zhou S."/>
            <person name="Teague B."/>
            <person name="Potamousis K."/>
            <person name="Churas C."/>
            <person name="Place M."/>
            <person name="Herschleb J."/>
            <person name="Runnheim R."/>
            <person name="Forrest D."/>
            <person name="Amos-Landgraf J."/>
            <person name="Schwartz D.C."/>
            <person name="Cheng Z."/>
            <person name="Lindblad-Toh K."/>
            <person name="Eichler E.E."/>
            <person name="Ponting C.P."/>
        </authorList>
    </citation>
    <scope>NUCLEOTIDE SEQUENCE [LARGE SCALE GENOMIC DNA]</scope>
    <source>
        <strain>C57BL/6J</strain>
    </source>
</reference>
<reference key="3">
    <citation type="journal article" date="1997" name="J. Cell Biol.">
        <title>A novel family of serine/threonine kinases participating in spermiogenesis.</title>
        <authorList>
            <person name="Kueng P."/>
            <person name="Nikolova Z."/>
            <person name="Djonov V."/>
            <person name="Hemphill A."/>
            <person name="Rohrbach V."/>
            <person name="Boehlen D."/>
            <person name="Zuercher G."/>
            <person name="Andres A.-C."/>
            <person name="Ziemiecki A."/>
        </authorList>
    </citation>
    <scope>NUCLEOTIDE SEQUENCE [MRNA] OF 56-565</scope>
    <scope>PHOSPHORYLATION</scope>
    <scope>TISSUE SPECIFICITY</scope>
    <source>
        <tissue>Testis</tissue>
    </source>
</reference>
<reference key="4">
    <citation type="journal article" date="2008" name="Dev. Biol.">
        <title>Targeted deletion of Tssk1 and 2 causes male infertility due to haploinsufficiency.</title>
        <authorList>
            <person name="Xu B."/>
            <person name="Hao Z."/>
            <person name="Jha K.N."/>
            <person name="Zhang Z."/>
            <person name="Urekar C."/>
            <person name="Digilio L."/>
            <person name="Pulido S."/>
            <person name="Strauss J.F. III"/>
            <person name="Flickinger C.J."/>
            <person name="Herr J.C."/>
        </authorList>
    </citation>
    <scope>PHOSPHORYLATION AT SER-281</scope>
</reference>
<reference key="5">
    <citation type="journal article" date="2008" name="Dev. Biol.">
        <title>TSKS concentrates in spermatid centrioles during flagellogenesis.</title>
        <authorList>
            <person name="Xu B."/>
            <person name="Hao Z."/>
            <person name="Jha K.N."/>
            <person name="Zhang Z."/>
            <person name="Urekar C."/>
            <person name="Digilio L."/>
            <person name="Pulido S."/>
            <person name="Strauss J.F. III"/>
            <person name="Flickinger C.J."/>
            <person name="Herr J.C."/>
        </authorList>
    </citation>
    <scope>SUBCELLULAR LOCATION</scope>
</reference>
<reference key="6">
    <citation type="journal article" date="2010" name="Cell">
        <title>A tissue-specific atlas of mouse protein phosphorylation and expression.</title>
        <authorList>
            <person name="Huttlin E.L."/>
            <person name="Jedrychowski M.P."/>
            <person name="Elias J.E."/>
            <person name="Goswami T."/>
            <person name="Rad R."/>
            <person name="Beausoleil S.A."/>
            <person name="Villen J."/>
            <person name="Haas W."/>
            <person name="Sowa M.E."/>
            <person name="Gygi S.P."/>
        </authorList>
    </citation>
    <scope>IDENTIFICATION BY MASS SPECTROMETRY [LARGE SCALE ANALYSIS]</scope>
    <source>
        <tissue>Testis</tissue>
    </source>
</reference>
<reference key="7">
    <citation type="journal article" date="2010" name="J. Cell Sci.">
        <title>Functional transformation of the chromatoid body in mouse spermatids requires testis-specific serine/threonine kinases.</title>
        <authorList>
            <person name="Shang P."/>
            <person name="Baarends W.M."/>
            <person name="Hoogerbrugge J."/>
            <person name="Ooms M.P."/>
            <person name="van Cappellen W.A."/>
            <person name="de Jong A.A."/>
            <person name="Dohle G.R."/>
            <person name="van Eenennaam H."/>
            <person name="Gossen J.A."/>
            <person name="Grootegoed J.A."/>
        </authorList>
    </citation>
    <scope>SUBCELLULAR LOCATION</scope>
</reference>
<feature type="chain" id="PRO_0000065666" description="Testis-specific serine kinase substrate">
    <location>
        <begin position="1"/>
        <end position="585"/>
    </location>
</feature>
<feature type="region of interest" description="Disordered" evidence="2">
    <location>
        <begin position="91"/>
        <end position="125"/>
    </location>
</feature>
<feature type="region of interest" description="Disordered" evidence="2">
    <location>
        <begin position="264"/>
        <end position="312"/>
    </location>
</feature>
<feature type="region of interest" description="Disordered" evidence="2">
    <location>
        <begin position="559"/>
        <end position="585"/>
    </location>
</feature>
<feature type="compositionally biased region" description="Low complexity" evidence="2">
    <location>
        <begin position="91"/>
        <end position="108"/>
    </location>
</feature>
<feature type="modified residue" description="Phosphoserine" evidence="1">
    <location>
        <position position="224"/>
    </location>
</feature>
<feature type="modified residue" description="Phosphoserine; by TSSK1 and TSSK2" evidence="3">
    <location>
        <position position="281"/>
    </location>
</feature>
<feature type="modified residue" description="Phosphoserine" evidence="1">
    <location>
        <position position="309"/>
    </location>
</feature>
<feature type="sequence conflict" description="In Ref. 3; AAC03366." evidence="5" ref="3">
    <original>P</original>
    <variation>T</variation>
    <location>
        <position position="112"/>
    </location>
</feature>
<feature type="sequence conflict" description="In Ref. 3; AAC03366." evidence="5" ref="3">
    <original>S</original>
    <variation>F</variation>
    <location>
        <position position="293"/>
    </location>
</feature>
<feature type="sequence conflict" description="In Ref. 3; AAC03366." evidence="5" ref="3">
    <original>A</original>
    <variation>P</variation>
    <location>
        <position position="344"/>
    </location>
</feature>
<feature type="sequence conflict" description="In Ref. 3; AAC03366." evidence="5" ref="3">
    <original>C</original>
    <variation>S</variation>
    <location>
        <position position="481"/>
    </location>
</feature>
<sequence length="585" mass="63505">MASVVVKTIWQSKEIHEAGDPPAGVESRAQLVPEAPGGVTSPAKGITKKKKAVSFHGVEPRMSHEPMHWCLNLKRSSACTNVSLLNLAAVEPDSSGTDSTTEDSGPLALPGPPASPTTPWAPEDPDITELLSGVNSGLVRAKDSITSLKEKTTRVNQHVQTLQSECSVLSENLERRRQEAEELEGYCSQLKGPRPDVLTQENCRKVTRSVEDAEIKTNVLKQNSALLEEKLRYLQQQLQDETPRRQEAELQELEQKLEAGLSRHGLSPATPIQGCSGPPGSPEEPPRQRGLSSSGWGMAVRTGEGPSLSEQELQKVSTGLEELRREVSSLAARWHQEEGAVQEALRLLGGLGGRLDGFLGQWERAQREQAQSARGLQELRGRADELCTMVERSAVSVASLRSELEALGPVKPILEELGRQLQNSRRGADHVLNLDRSAQGPCARCASQGQQLSTESLQQLLERALTPLVDEVKQKGLAPACPSCQRLHKKILELERQALAKHVRAEALSSTLRLAQDEAVRAKNLLLTDKMKPEEKVATLDYMHLKMCSLHDQLSHLPLEGSTGAMGGGSNGGAPPKRGSPGSEQ</sequence>
<protein>
    <recommendedName>
        <fullName>Testis-specific serine kinase substrate</fullName>
        <shortName>Testis-specific kinase substrate</shortName>
    </recommendedName>
    <alternativeName>
        <fullName>STK22 substrate 1</fullName>
    </alternativeName>
</protein>
<accession>O54887</accession>
<accession>E9QJS9</accession>
<keyword id="KW-0963">Cytoplasm</keyword>
<keyword id="KW-0968">Cytoplasmic vesicle</keyword>
<keyword id="KW-0206">Cytoskeleton</keyword>
<keyword id="KW-0597">Phosphoprotein</keyword>
<keyword id="KW-1185">Reference proteome</keyword>
<dbReference type="EMBL" id="AC155806">
    <property type="status" value="NOT_ANNOTATED_CDS"/>
    <property type="molecule type" value="Genomic_DNA"/>
</dbReference>
<dbReference type="EMBL" id="AF025310">
    <property type="protein sequence ID" value="AAC03366.2"/>
    <property type="status" value="ALT_FRAME"/>
    <property type="molecule type" value="mRNA"/>
</dbReference>
<dbReference type="CCDS" id="CCDS52240.1"/>
<dbReference type="RefSeq" id="NP_035781.2">
    <property type="nucleotide sequence ID" value="NM_011651.2"/>
</dbReference>
<dbReference type="SMR" id="O54887"/>
<dbReference type="BioGRID" id="204354">
    <property type="interactions" value="1"/>
</dbReference>
<dbReference type="FunCoup" id="O54887">
    <property type="interactions" value="25"/>
</dbReference>
<dbReference type="STRING" id="10090.ENSMUSP00000112673"/>
<dbReference type="iPTMnet" id="O54887"/>
<dbReference type="PhosphoSitePlus" id="O54887"/>
<dbReference type="SwissPalm" id="O54887"/>
<dbReference type="jPOST" id="O54887"/>
<dbReference type="PaxDb" id="10090-ENSMUSP00000112673"/>
<dbReference type="PeptideAtlas" id="O54887"/>
<dbReference type="ProteomicsDB" id="300137"/>
<dbReference type="Antibodypedia" id="18691">
    <property type="antibodies" value="119 antibodies from 19 providers"/>
</dbReference>
<dbReference type="DNASU" id="22116"/>
<dbReference type="Ensembl" id="ENSMUST00000120929.9">
    <property type="protein sequence ID" value="ENSMUSP00000112673.2"/>
    <property type="gene ID" value="ENSMUSG00000059891.15"/>
</dbReference>
<dbReference type="GeneID" id="22116"/>
<dbReference type="KEGG" id="mmu:22116"/>
<dbReference type="UCSC" id="uc009gry.2">
    <property type="organism name" value="mouse"/>
</dbReference>
<dbReference type="AGR" id="MGI:1347560"/>
<dbReference type="CTD" id="60385"/>
<dbReference type="MGI" id="MGI:1347560">
    <property type="gene designation" value="Tsks"/>
</dbReference>
<dbReference type="VEuPathDB" id="HostDB:ENSMUSG00000059891"/>
<dbReference type="eggNOG" id="ENOG502RT0F">
    <property type="taxonomic scope" value="Eukaryota"/>
</dbReference>
<dbReference type="GeneTree" id="ENSGT00390000002611"/>
<dbReference type="InParanoid" id="O54887"/>
<dbReference type="OMA" id="ENCWMVT"/>
<dbReference type="OrthoDB" id="9424665at2759"/>
<dbReference type="PhylomeDB" id="O54887"/>
<dbReference type="TreeFam" id="TF337594"/>
<dbReference type="BioGRID-ORCS" id="22116">
    <property type="hits" value="3 hits in 76 CRISPR screens"/>
</dbReference>
<dbReference type="CD-CODE" id="01CA17F3">
    <property type="entry name" value="Centrosome"/>
</dbReference>
<dbReference type="CD-CODE" id="DE1E139C">
    <property type="entry name" value="Chromatoid body"/>
</dbReference>
<dbReference type="PRO" id="PR:O54887"/>
<dbReference type="Proteomes" id="UP000000589">
    <property type="component" value="Chromosome 7"/>
</dbReference>
<dbReference type="RNAct" id="O54887">
    <property type="molecule type" value="protein"/>
</dbReference>
<dbReference type="Bgee" id="ENSMUSG00000059891">
    <property type="expression patterns" value="Expressed in spermatid and 207 other cell types or tissues"/>
</dbReference>
<dbReference type="ExpressionAtlas" id="O54887">
    <property type="expression patterns" value="baseline and differential"/>
</dbReference>
<dbReference type="GO" id="GO:0001669">
    <property type="term" value="C:acrosomal vesicle"/>
    <property type="evidence" value="ECO:0000304"/>
    <property type="project" value="UniProtKB"/>
</dbReference>
<dbReference type="GO" id="GO:0005814">
    <property type="term" value="C:centriole"/>
    <property type="evidence" value="ECO:0000314"/>
    <property type="project" value="UniProtKB"/>
</dbReference>
<dbReference type="GO" id="GO:0019901">
    <property type="term" value="F:protein kinase binding"/>
    <property type="evidence" value="ECO:0000353"/>
    <property type="project" value="UniProtKB"/>
</dbReference>
<dbReference type="InterPro" id="IPR028214">
    <property type="entry name" value="TSKS"/>
</dbReference>
<dbReference type="PANTHER" id="PTHR14351">
    <property type="entry name" value="TESTIS-SPECIFIC SERINE KINASE SUBSTRATE"/>
    <property type="match status" value="1"/>
</dbReference>
<dbReference type="PANTHER" id="PTHR14351:SF1">
    <property type="entry name" value="TESTIS-SPECIFIC SERINE KINASE SUBSTRATE"/>
    <property type="match status" value="1"/>
</dbReference>
<dbReference type="Pfam" id="PF15358">
    <property type="entry name" value="TSKS"/>
    <property type="match status" value="1"/>
</dbReference>
<evidence type="ECO:0000250" key="1">
    <source>
        <dbReference type="UniProtKB" id="P60531"/>
    </source>
</evidence>
<evidence type="ECO:0000256" key="2">
    <source>
        <dbReference type="SAM" id="MobiDB-lite"/>
    </source>
</evidence>
<evidence type="ECO:0000269" key="3">
    <source>
    </source>
</evidence>
<evidence type="ECO:0000269" key="4">
    <source>
    </source>
</evidence>
<evidence type="ECO:0000305" key="5"/>
<name>TSKS_MOUSE</name>